<feature type="chain" id="PRO_1000076459" description="Phosphoribosylaminoimidazole-succinocarboxamide synthase">
    <location>
        <begin position="1"/>
        <end position="287"/>
    </location>
</feature>
<protein>
    <recommendedName>
        <fullName evidence="1">Phosphoribosylaminoimidazole-succinocarboxamide synthase</fullName>
        <ecNumber evidence="1">6.3.2.6</ecNumber>
    </recommendedName>
    <alternativeName>
        <fullName evidence="1">SAICAR synthetase</fullName>
    </alternativeName>
</protein>
<proteinExistence type="inferred from homology"/>
<sequence>MSEIGLVKIYSGKVRDLYEIDDKRMLMVASDRLSAFDVILDDPIPSKGEILTQISNFWFKKLAHIMPNHFTGQTVYDVLPENEAKVLEKRAVVAKKLTPVKVEAIVRGYLAGSGWKDYQKTGSVCGIRLPEGMQEAQQLPEVIFTPSTKAAVGDHDENISFEECGRIIGKELAEEVRAKAVRLYTEAAEYAKSRGIIICDTKFEFGLDTNGTLTLMDEVLTPDSSRFWPADQYKVGTNPPSFDKQFVRDWLEQSGWNKKAPAPKVPADVIQKTVEKYREALTLLTQD</sequence>
<accession>A9M3I9</accession>
<gene>
    <name evidence="1" type="primary">purC</name>
    <name type="ordered locus">NMCC_0721</name>
</gene>
<dbReference type="EC" id="6.3.2.6" evidence="1"/>
<dbReference type="EMBL" id="CP000381">
    <property type="protein sequence ID" value="ABX72914.1"/>
    <property type="molecule type" value="Genomic_DNA"/>
</dbReference>
<dbReference type="RefSeq" id="WP_012221454.1">
    <property type="nucleotide sequence ID" value="NC_010120.1"/>
</dbReference>
<dbReference type="SMR" id="A9M3I9"/>
<dbReference type="KEGG" id="nmn:NMCC_0721"/>
<dbReference type="HOGENOM" id="CLU_045637_0_0_4"/>
<dbReference type="UniPathway" id="UPA00074">
    <property type="reaction ID" value="UER00131"/>
</dbReference>
<dbReference type="Proteomes" id="UP000001177">
    <property type="component" value="Chromosome"/>
</dbReference>
<dbReference type="GO" id="GO:0005737">
    <property type="term" value="C:cytoplasm"/>
    <property type="evidence" value="ECO:0007669"/>
    <property type="project" value="TreeGrafter"/>
</dbReference>
<dbReference type="GO" id="GO:0005524">
    <property type="term" value="F:ATP binding"/>
    <property type="evidence" value="ECO:0007669"/>
    <property type="project" value="UniProtKB-KW"/>
</dbReference>
<dbReference type="GO" id="GO:0004639">
    <property type="term" value="F:phosphoribosylaminoimidazolesuccinocarboxamide synthase activity"/>
    <property type="evidence" value="ECO:0007669"/>
    <property type="project" value="UniProtKB-UniRule"/>
</dbReference>
<dbReference type="GO" id="GO:0006189">
    <property type="term" value="P:'de novo' IMP biosynthetic process"/>
    <property type="evidence" value="ECO:0007669"/>
    <property type="project" value="UniProtKB-UniRule"/>
</dbReference>
<dbReference type="CDD" id="cd01414">
    <property type="entry name" value="SAICAR_synt_Sc"/>
    <property type="match status" value="1"/>
</dbReference>
<dbReference type="FunFam" id="3.30.200.20:FF:000365">
    <property type="entry name" value="Phosphoribosylaminoimidazole-succinocarboxamide synthase"/>
    <property type="match status" value="1"/>
</dbReference>
<dbReference type="FunFam" id="3.30.470.20:FF:000015">
    <property type="entry name" value="Phosphoribosylaminoimidazole-succinocarboxamide synthase"/>
    <property type="match status" value="1"/>
</dbReference>
<dbReference type="Gene3D" id="3.30.470.20">
    <property type="entry name" value="ATP-grasp fold, B domain"/>
    <property type="match status" value="1"/>
</dbReference>
<dbReference type="Gene3D" id="3.30.200.20">
    <property type="entry name" value="Phosphorylase Kinase, domain 1"/>
    <property type="match status" value="1"/>
</dbReference>
<dbReference type="HAMAP" id="MF_00137">
    <property type="entry name" value="SAICAR_synth"/>
    <property type="match status" value="1"/>
</dbReference>
<dbReference type="InterPro" id="IPR028923">
    <property type="entry name" value="SAICAR_synt/ADE2_N"/>
</dbReference>
<dbReference type="InterPro" id="IPR001636">
    <property type="entry name" value="SAICAR_synth"/>
</dbReference>
<dbReference type="InterPro" id="IPR018236">
    <property type="entry name" value="SAICAR_synthetase_CS"/>
</dbReference>
<dbReference type="NCBIfam" id="NF010568">
    <property type="entry name" value="PRK13961.1"/>
    <property type="match status" value="1"/>
</dbReference>
<dbReference type="NCBIfam" id="TIGR00081">
    <property type="entry name" value="purC"/>
    <property type="match status" value="1"/>
</dbReference>
<dbReference type="PANTHER" id="PTHR43700">
    <property type="entry name" value="PHOSPHORIBOSYLAMINOIMIDAZOLE-SUCCINOCARBOXAMIDE SYNTHASE"/>
    <property type="match status" value="1"/>
</dbReference>
<dbReference type="PANTHER" id="PTHR43700:SF1">
    <property type="entry name" value="PHOSPHORIBOSYLAMINOIMIDAZOLE-SUCCINOCARBOXAMIDE SYNTHASE"/>
    <property type="match status" value="1"/>
</dbReference>
<dbReference type="Pfam" id="PF01259">
    <property type="entry name" value="SAICAR_synt"/>
    <property type="match status" value="1"/>
</dbReference>
<dbReference type="SUPFAM" id="SSF56104">
    <property type="entry name" value="SAICAR synthase-like"/>
    <property type="match status" value="1"/>
</dbReference>
<dbReference type="PROSITE" id="PS01057">
    <property type="entry name" value="SAICAR_SYNTHETASE_1"/>
    <property type="match status" value="1"/>
</dbReference>
<dbReference type="PROSITE" id="PS01058">
    <property type="entry name" value="SAICAR_SYNTHETASE_2"/>
    <property type="match status" value="1"/>
</dbReference>
<name>PUR7_NEIM0</name>
<keyword id="KW-0067">ATP-binding</keyword>
<keyword id="KW-0436">Ligase</keyword>
<keyword id="KW-0547">Nucleotide-binding</keyword>
<keyword id="KW-0658">Purine biosynthesis</keyword>
<reference key="1">
    <citation type="journal article" date="2008" name="Genomics">
        <title>Characterization of ST-4821 complex, a unique Neisseria meningitidis clone.</title>
        <authorList>
            <person name="Peng J."/>
            <person name="Yang L."/>
            <person name="Yang F."/>
            <person name="Yang J."/>
            <person name="Yan Y."/>
            <person name="Nie H."/>
            <person name="Zhang X."/>
            <person name="Xiong Z."/>
            <person name="Jiang Y."/>
            <person name="Cheng F."/>
            <person name="Xu X."/>
            <person name="Chen S."/>
            <person name="Sun L."/>
            <person name="Li W."/>
            <person name="Shen Y."/>
            <person name="Shao Z."/>
            <person name="Liang X."/>
            <person name="Xu J."/>
            <person name="Jin Q."/>
        </authorList>
    </citation>
    <scope>NUCLEOTIDE SEQUENCE [LARGE SCALE GENOMIC DNA]</scope>
    <source>
        <strain>053442</strain>
    </source>
</reference>
<evidence type="ECO:0000255" key="1">
    <source>
        <dbReference type="HAMAP-Rule" id="MF_00137"/>
    </source>
</evidence>
<comment type="catalytic activity">
    <reaction evidence="1">
        <text>5-amino-1-(5-phospho-D-ribosyl)imidazole-4-carboxylate + L-aspartate + ATP = (2S)-2-[5-amino-1-(5-phospho-beta-D-ribosyl)imidazole-4-carboxamido]succinate + ADP + phosphate + 2 H(+)</text>
        <dbReference type="Rhea" id="RHEA:22628"/>
        <dbReference type="ChEBI" id="CHEBI:15378"/>
        <dbReference type="ChEBI" id="CHEBI:29991"/>
        <dbReference type="ChEBI" id="CHEBI:30616"/>
        <dbReference type="ChEBI" id="CHEBI:43474"/>
        <dbReference type="ChEBI" id="CHEBI:58443"/>
        <dbReference type="ChEBI" id="CHEBI:77657"/>
        <dbReference type="ChEBI" id="CHEBI:456216"/>
        <dbReference type="EC" id="6.3.2.6"/>
    </reaction>
</comment>
<comment type="pathway">
    <text evidence="1">Purine metabolism; IMP biosynthesis via de novo pathway; 5-amino-1-(5-phospho-D-ribosyl)imidazole-4-carboxamide from 5-amino-1-(5-phospho-D-ribosyl)imidazole-4-carboxylate: step 1/2.</text>
</comment>
<comment type="similarity">
    <text evidence="1">Belongs to the SAICAR synthetase family.</text>
</comment>
<organism>
    <name type="scientific">Neisseria meningitidis serogroup C (strain 053442)</name>
    <dbReference type="NCBI Taxonomy" id="374833"/>
    <lineage>
        <taxon>Bacteria</taxon>
        <taxon>Pseudomonadati</taxon>
        <taxon>Pseudomonadota</taxon>
        <taxon>Betaproteobacteria</taxon>
        <taxon>Neisseriales</taxon>
        <taxon>Neisseriaceae</taxon>
        <taxon>Neisseria</taxon>
    </lineage>
</organism>